<protein>
    <recommendedName>
        <fullName evidence="1">Trigger factor</fullName>
        <shortName evidence="1">TF</shortName>
        <ecNumber evidence="1">5.2.1.8</ecNumber>
    </recommendedName>
    <alternativeName>
        <fullName evidence="1">PPIase</fullName>
    </alternativeName>
</protein>
<gene>
    <name evidence="1" type="primary">tig</name>
    <name type="ordered locus">alr3681</name>
</gene>
<name>TIG_NOSS1</name>
<comment type="function">
    <text evidence="1">Involved in protein export. Acts as a chaperone by maintaining the newly synthesized protein in an open conformation. Functions as a peptidyl-prolyl cis-trans isomerase.</text>
</comment>
<comment type="catalytic activity">
    <reaction evidence="1">
        <text>[protein]-peptidylproline (omega=180) = [protein]-peptidylproline (omega=0)</text>
        <dbReference type="Rhea" id="RHEA:16237"/>
        <dbReference type="Rhea" id="RHEA-COMP:10747"/>
        <dbReference type="Rhea" id="RHEA-COMP:10748"/>
        <dbReference type="ChEBI" id="CHEBI:83833"/>
        <dbReference type="ChEBI" id="CHEBI:83834"/>
        <dbReference type="EC" id="5.2.1.8"/>
    </reaction>
</comment>
<comment type="subcellular location">
    <subcellularLocation>
        <location>Cytoplasm</location>
    </subcellularLocation>
    <text evidence="1">About half TF is bound to the ribosome near the polypeptide exit tunnel while the other half is free in the cytoplasm.</text>
</comment>
<comment type="domain">
    <text evidence="1">Consists of 3 domains; the N-terminus binds the ribosome, the middle domain has PPIase activity, while the C-terminus has intrinsic chaperone activity on its own.</text>
</comment>
<comment type="similarity">
    <text evidence="1">Belongs to the FKBP-type PPIase family. Tig subfamily.</text>
</comment>
<organism>
    <name type="scientific">Nostoc sp. (strain PCC 7120 / SAG 25.82 / UTEX 2576)</name>
    <dbReference type="NCBI Taxonomy" id="103690"/>
    <lineage>
        <taxon>Bacteria</taxon>
        <taxon>Bacillati</taxon>
        <taxon>Cyanobacteriota</taxon>
        <taxon>Cyanophyceae</taxon>
        <taxon>Nostocales</taxon>
        <taxon>Nostocaceae</taxon>
        <taxon>Nostoc</taxon>
    </lineage>
</organism>
<reference key="1">
    <citation type="journal article" date="2001" name="DNA Res.">
        <title>Complete genomic sequence of the filamentous nitrogen-fixing cyanobacterium Anabaena sp. strain PCC 7120.</title>
        <authorList>
            <person name="Kaneko T."/>
            <person name="Nakamura Y."/>
            <person name="Wolk C.P."/>
            <person name="Kuritz T."/>
            <person name="Sasamoto S."/>
            <person name="Watanabe A."/>
            <person name="Iriguchi M."/>
            <person name="Ishikawa A."/>
            <person name="Kawashima K."/>
            <person name="Kimura T."/>
            <person name="Kishida Y."/>
            <person name="Kohara M."/>
            <person name="Matsumoto M."/>
            <person name="Matsuno A."/>
            <person name="Muraki A."/>
            <person name="Nakazaki N."/>
            <person name="Shimpo S."/>
            <person name="Sugimoto M."/>
            <person name="Takazawa M."/>
            <person name="Yamada M."/>
            <person name="Yasuda M."/>
            <person name="Tabata S."/>
        </authorList>
    </citation>
    <scope>NUCLEOTIDE SEQUENCE [LARGE SCALE GENOMIC DNA]</scope>
    <source>
        <strain>PCC 7120 / SAG 25.82 / UTEX 2576</strain>
    </source>
</reference>
<keyword id="KW-0131">Cell cycle</keyword>
<keyword id="KW-0132">Cell division</keyword>
<keyword id="KW-0143">Chaperone</keyword>
<keyword id="KW-0963">Cytoplasm</keyword>
<keyword id="KW-0413">Isomerase</keyword>
<keyword id="KW-1185">Reference proteome</keyword>
<keyword id="KW-0697">Rotamase</keyword>
<accession>Q8YQX9</accession>
<feature type="chain" id="PRO_0000179301" description="Trigger factor">
    <location>
        <begin position="1"/>
        <end position="471"/>
    </location>
</feature>
<feature type="domain" description="PPIase FKBP-type" evidence="1">
    <location>
        <begin position="169"/>
        <end position="264"/>
    </location>
</feature>
<proteinExistence type="inferred from homology"/>
<dbReference type="EC" id="5.2.1.8" evidence="1"/>
<dbReference type="EMBL" id="BA000019">
    <property type="protein sequence ID" value="BAB75380.1"/>
    <property type="molecule type" value="Genomic_DNA"/>
</dbReference>
<dbReference type="PIR" id="AB2266">
    <property type="entry name" value="AB2266"/>
</dbReference>
<dbReference type="RefSeq" id="WP_010997825.1">
    <property type="nucleotide sequence ID" value="NZ_RSCN01000044.1"/>
</dbReference>
<dbReference type="SMR" id="Q8YQX9"/>
<dbReference type="STRING" id="103690.gene:10495723"/>
<dbReference type="KEGG" id="ana:alr3681"/>
<dbReference type="eggNOG" id="COG0544">
    <property type="taxonomic scope" value="Bacteria"/>
</dbReference>
<dbReference type="OrthoDB" id="9767721at2"/>
<dbReference type="Proteomes" id="UP000002483">
    <property type="component" value="Chromosome"/>
</dbReference>
<dbReference type="GO" id="GO:0005737">
    <property type="term" value="C:cytoplasm"/>
    <property type="evidence" value="ECO:0007669"/>
    <property type="project" value="UniProtKB-SubCell"/>
</dbReference>
<dbReference type="GO" id="GO:0003755">
    <property type="term" value="F:peptidyl-prolyl cis-trans isomerase activity"/>
    <property type="evidence" value="ECO:0007669"/>
    <property type="project" value="UniProtKB-UniRule"/>
</dbReference>
<dbReference type="GO" id="GO:0044183">
    <property type="term" value="F:protein folding chaperone"/>
    <property type="evidence" value="ECO:0007669"/>
    <property type="project" value="TreeGrafter"/>
</dbReference>
<dbReference type="GO" id="GO:0043022">
    <property type="term" value="F:ribosome binding"/>
    <property type="evidence" value="ECO:0007669"/>
    <property type="project" value="TreeGrafter"/>
</dbReference>
<dbReference type="GO" id="GO:0051083">
    <property type="term" value="P:'de novo' cotranslational protein folding"/>
    <property type="evidence" value="ECO:0007669"/>
    <property type="project" value="TreeGrafter"/>
</dbReference>
<dbReference type="GO" id="GO:0051301">
    <property type="term" value="P:cell division"/>
    <property type="evidence" value="ECO:0007669"/>
    <property type="project" value="UniProtKB-KW"/>
</dbReference>
<dbReference type="GO" id="GO:0061077">
    <property type="term" value="P:chaperone-mediated protein folding"/>
    <property type="evidence" value="ECO:0007669"/>
    <property type="project" value="TreeGrafter"/>
</dbReference>
<dbReference type="GO" id="GO:0015031">
    <property type="term" value="P:protein transport"/>
    <property type="evidence" value="ECO:0007669"/>
    <property type="project" value="UniProtKB-UniRule"/>
</dbReference>
<dbReference type="GO" id="GO:0043335">
    <property type="term" value="P:protein unfolding"/>
    <property type="evidence" value="ECO:0007669"/>
    <property type="project" value="TreeGrafter"/>
</dbReference>
<dbReference type="FunFam" id="3.10.50.40:FF:000001">
    <property type="entry name" value="Trigger factor"/>
    <property type="match status" value="1"/>
</dbReference>
<dbReference type="FunFam" id="3.30.70.1050:FF:000004">
    <property type="entry name" value="Trigger factor"/>
    <property type="match status" value="1"/>
</dbReference>
<dbReference type="Gene3D" id="3.10.50.40">
    <property type="match status" value="1"/>
</dbReference>
<dbReference type="Gene3D" id="3.30.70.1050">
    <property type="entry name" value="Trigger factor ribosome-binding domain"/>
    <property type="match status" value="1"/>
</dbReference>
<dbReference type="Gene3D" id="1.10.3120.10">
    <property type="entry name" value="Trigger factor, C-terminal domain"/>
    <property type="match status" value="1"/>
</dbReference>
<dbReference type="HAMAP" id="MF_00303">
    <property type="entry name" value="Trigger_factor_Tig"/>
    <property type="match status" value="1"/>
</dbReference>
<dbReference type="InterPro" id="IPR046357">
    <property type="entry name" value="PPIase_dom_sf"/>
</dbReference>
<dbReference type="InterPro" id="IPR001179">
    <property type="entry name" value="PPIase_FKBP_dom"/>
</dbReference>
<dbReference type="InterPro" id="IPR005215">
    <property type="entry name" value="Trig_fac"/>
</dbReference>
<dbReference type="InterPro" id="IPR008880">
    <property type="entry name" value="Trigger_fac_C"/>
</dbReference>
<dbReference type="InterPro" id="IPR037041">
    <property type="entry name" value="Trigger_fac_C_sf"/>
</dbReference>
<dbReference type="InterPro" id="IPR008881">
    <property type="entry name" value="Trigger_fac_ribosome-bd_bac"/>
</dbReference>
<dbReference type="InterPro" id="IPR036611">
    <property type="entry name" value="Trigger_fac_ribosome-bd_sf"/>
</dbReference>
<dbReference type="InterPro" id="IPR027304">
    <property type="entry name" value="Trigger_fact/SurA_dom_sf"/>
</dbReference>
<dbReference type="NCBIfam" id="TIGR00115">
    <property type="entry name" value="tig"/>
    <property type="match status" value="1"/>
</dbReference>
<dbReference type="PANTHER" id="PTHR30560">
    <property type="entry name" value="TRIGGER FACTOR CHAPERONE AND PEPTIDYL-PROLYL CIS/TRANS ISOMERASE"/>
    <property type="match status" value="1"/>
</dbReference>
<dbReference type="PANTHER" id="PTHR30560:SF3">
    <property type="entry name" value="TRIGGER FACTOR-LIKE PROTEIN TIG, CHLOROPLASTIC"/>
    <property type="match status" value="1"/>
</dbReference>
<dbReference type="Pfam" id="PF00254">
    <property type="entry name" value="FKBP_C"/>
    <property type="match status" value="1"/>
</dbReference>
<dbReference type="Pfam" id="PF05698">
    <property type="entry name" value="Trigger_C"/>
    <property type="match status" value="1"/>
</dbReference>
<dbReference type="Pfam" id="PF05697">
    <property type="entry name" value="Trigger_N"/>
    <property type="match status" value="1"/>
</dbReference>
<dbReference type="PIRSF" id="PIRSF003095">
    <property type="entry name" value="Trigger_factor"/>
    <property type="match status" value="1"/>
</dbReference>
<dbReference type="SUPFAM" id="SSF54534">
    <property type="entry name" value="FKBP-like"/>
    <property type="match status" value="1"/>
</dbReference>
<dbReference type="SUPFAM" id="SSF109998">
    <property type="entry name" value="Triger factor/SurA peptide-binding domain-like"/>
    <property type="match status" value="1"/>
</dbReference>
<dbReference type="SUPFAM" id="SSF102735">
    <property type="entry name" value="Trigger factor ribosome-binding domain"/>
    <property type="match status" value="1"/>
</dbReference>
<sequence>MKVTQEKLPASQIGLEIEITPEITQKTYEQVIKNLSRTVNIPGFRKGKVPRQVLLQRLGKTHIKAAALEELLQDGIEQAIKQESIAAIGQPRLRSSFDDLINSYEPGQPLTFTAAVDVEPEINLVQYTGLEAKAEEIKYDPARVDEVLEKERQELATLIPVEGRSAQIGDVAVVDFKGVIAKAEGDDENAEPEPIPGGDASDFQVELQEDRFIPGFVTGIVGMNPGDTKEVSAQFPDPYVNQELAGKPAIFTVTLKEIKEKELPELNDDFAQEVSDFDTLEALRASLAERYQKEAEDKTKNNQQEALLGELVKHIEVDLPETLIEKEVDAMLTQTAMRLSQQGLDVKKLFTQDIIPQLRERSRPEAVERLKRSLGLQEVAKRESITVTPEEIQARVTELVQQYPDEDIDAERLQTIVENELLSEKIIDWLLANSTVELVPEGSLASQEPEITAPETEAETIEVAAESTTGE</sequence>
<evidence type="ECO:0000255" key="1">
    <source>
        <dbReference type="HAMAP-Rule" id="MF_00303"/>
    </source>
</evidence>